<keyword id="KW-0496">Mitochondrion</keyword>
<keyword id="KW-0560">Oxidoreductase</keyword>
<keyword id="KW-1185">Reference proteome</keyword>
<keyword id="KW-0831">Ubiquinone biosynthesis</keyword>
<dbReference type="EC" id="1.5.1.36" evidence="3"/>
<dbReference type="EMBL" id="CU329670">
    <property type="protein sequence ID" value="CAB59887.1"/>
    <property type="molecule type" value="Genomic_DNA"/>
</dbReference>
<dbReference type="PIR" id="T37493">
    <property type="entry name" value="T37493"/>
</dbReference>
<dbReference type="RefSeq" id="NP_594361.1">
    <property type="nucleotide sequence ID" value="NM_001019782.2"/>
</dbReference>
<dbReference type="SMR" id="Q9UTQ4"/>
<dbReference type="BioGRID" id="279372">
    <property type="interactions" value="32"/>
</dbReference>
<dbReference type="STRING" id="284812.Q9UTQ4"/>
<dbReference type="iPTMnet" id="Q9UTQ4"/>
<dbReference type="PaxDb" id="4896-SPAC1071.11.1"/>
<dbReference type="EnsemblFungi" id="SPAC1071.11.1">
    <property type="protein sequence ID" value="SPAC1071.11.1:pep"/>
    <property type="gene ID" value="SPAC1071.11"/>
</dbReference>
<dbReference type="GeneID" id="2542931"/>
<dbReference type="KEGG" id="spo:2542931"/>
<dbReference type="PomBase" id="SPAC1071.11">
    <property type="gene designation" value="coq12"/>
</dbReference>
<dbReference type="VEuPathDB" id="FungiDB:SPAC1071.11"/>
<dbReference type="eggNOG" id="ENOG502RYSQ">
    <property type="taxonomic scope" value="Eukaryota"/>
</dbReference>
<dbReference type="HOGENOM" id="CLU_1138566_0_0_1"/>
<dbReference type="InParanoid" id="Q9UTQ4"/>
<dbReference type="OMA" id="HSQWASI"/>
<dbReference type="PhylomeDB" id="Q9UTQ4"/>
<dbReference type="PRO" id="PR:Q9UTQ4"/>
<dbReference type="Proteomes" id="UP000002485">
    <property type="component" value="Chromosome I"/>
</dbReference>
<dbReference type="GO" id="GO:0005739">
    <property type="term" value="C:mitochondrion"/>
    <property type="evidence" value="ECO:0000314"/>
    <property type="project" value="PomBase"/>
</dbReference>
<dbReference type="GO" id="GO:0036382">
    <property type="term" value="F:flavin reductase (NADH) activity"/>
    <property type="evidence" value="ECO:0000314"/>
    <property type="project" value="PomBase"/>
</dbReference>
<dbReference type="GO" id="GO:0010181">
    <property type="term" value="F:FMN binding"/>
    <property type="evidence" value="ECO:0007669"/>
    <property type="project" value="InterPro"/>
</dbReference>
<dbReference type="GO" id="GO:0042602">
    <property type="term" value="F:riboflavin reductase (NADPH) activity"/>
    <property type="evidence" value="ECO:0000318"/>
    <property type="project" value="GO_Central"/>
</dbReference>
<dbReference type="GO" id="GO:0006744">
    <property type="term" value="P:ubiquinone biosynthetic process"/>
    <property type="evidence" value="ECO:0000314"/>
    <property type="project" value="PomBase"/>
</dbReference>
<dbReference type="Gene3D" id="2.30.110.10">
    <property type="entry name" value="Electron Transport, Fmn-binding Protein, Chain A"/>
    <property type="match status" value="1"/>
</dbReference>
<dbReference type="InterPro" id="IPR002563">
    <property type="entry name" value="Flavin_Rdtase-like_dom"/>
</dbReference>
<dbReference type="InterPro" id="IPR050268">
    <property type="entry name" value="NADH-dep_flavin_reductase"/>
</dbReference>
<dbReference type="InterPro" id="IPR012349">
    <property type="entry name" value="Split_barrel_FMN-bd"/>
</dbReference>
<dbReference type="PANTHER" id="PTHR30466">
    <property type="entry name" value="FLAVIN REDUCTASE"/>
    <property type="match status" value="1"/>
</dbReference>
<dbReference type="PANTHER" id="PTHR30466:SF1">
    <property type="entry name" value="FMN REDUCTASE (NADH) RUTF"/>
    <property type="match status" value="1"/>
</dbReference>
<dbReference type="Pfam" id="PF01613">
    <property type="entry name" value="Flavin_Reduct"/>
    <property type="match status" value="1"/>
</dbReference>
<dbReference type="SMART" id="SM00903">
    <property type="entry name" value="Flavin_Reduct"/>
    <property type="match status" value="1"/>
</dbReference>
<dbReference type="SUPFAM" id="SSF50475">
    <property type="entry name" value="FMN-binding split barrel"/>
    <property type="match status" value="1"/>
</dbReference>
<proteinExistence type="evidence at protein level"/>
<accession>Q9UTQ4</accession>
<sequence>MSIRFTHCFTSSSSLPCYILRHLPFSNFNRYSTASHDNVNAFRLLMRRFAQPVVIITSGFADGHRAGMTASSFTPVSLTPNPVISFNIKIPSRTANAIQQSNRVIVHLLSSSIKKHSEWASLLAKQKHQINPLMNSEKNSTSVEDLPGSNRTQQTSSHSLLHPLHPIDVSLSKEGLPCLVDSLGLLHCSIIHSYQVQDHILFVANVERVEHGSSPLESSSGLVYYNRNYCSTSPLSPIIDSFES</sequence>
<reference key="1">
    <citation type="journal article" date="2002" name="Nature">
        <title>The genome sequence of Schizosaccharomyces pombe.</title>
        <authorList>
            <person name="Wood V."/>
            <person name="Gwilliam R."/>
            <person name="Rajandream M.A."/>
            <person name="Lyne M.H."/>
            <person name="Lyne R."/>
            <person name="Stewart A."/>
            <person name="Sgouros J.G."/>
            <person name="Peat N."/>
            <person name="Hayles J."/>
            <person name="Baker S.G."/>
            <person name="Basham D."/>
            <person name="Bowman S."/>
            <person name="Brooks K."/>
            <person name="Brown D."/>
            <person name="Brown S."/>
            <person name="Chillingworth T."/>
            <person name="Churcher C.M."/>
            <person name="Collins M."/>
            <person name="Connor R."/>
            <person name="Cronin A."/>
            <person name="Davis P."/>
            <person name="Feltwell T."/>
            <person name="Fraser A."/>
            <person name="Gentles S."/>
            <person name="Goble A."/>
            <person name="Hamlin N."/>
            <person name="Harris D.E."/>
            <person name="Hidalgo J."/>
            <person name="Hodgson G."/>
            <person name="Holroyd S."/>
            <person name="Hornsby T."/>
            <person name="Howarth S."/>
            <person name="Huckle E.J."/>
            <person name="Hunt S."/>
            <person name="Jagels K."/>
            <person name="James K.D."/>
            <person name="Jones L."/>
            <person name="Jones M."/>
            <person name="Leather S."/>
            <person name="McDonald S."/>
            <person name="McLean J."/>
            <person name="Mooney P."/>
            <person name="Moule S."/>
            <person name="Mungall K.L."/>
            <person name="Murphy L.D."/>
            <person name="Niblett D."/>
            <person name="Odell C."/>
            <person name="Oliver K."/>
            <person name="O'Neil S."/>
            <person name="Pearson D."/>
            <person name="Quail M.A."/>
            <person name="Rabbinowitsch E."/>
            <person name="Rutherford K.M."/>
            <person name="Rutter S."/>
            <person name="Saunders D."/>
            <person name="Seeger K."/>
            <person name="Sharp S."/>
            <person name="Skelton J."/>
            <person name="Simmonds M.N."/>
            <person name="Squares R."/>
            <person name="Squares S."/>
            <person name="Stevens K."/>
            <person name="Taylor K."/>
            <person name="Taylor R.G."/>
            <person name="Tivey A."/>
            <person name="Walsh S.V."/>
            <person name="Warren T."/>
            <person name="Whitehead S."/>
            <person name="Woodward J.R."/>
            <person name="Volckaert G."/>
            <person name="Aert R."/>
            <person name="Robben J."/>
            <person name="Grymonprez B."/>
            <person name="Weltjens I."/>
            <person name="Vanstreels E."/>
            <person name="Rieger M."/>
            <person name="Schaefer M."/>
            <person name="Mueller-Auer S."/>
            <person name="Gabel C."/>
            <person name="Fuchs M."/>
            <person name="Duesterhoeft A."/>
            <person name="Fritzc C."/>
            <person name="Holzer E."/>
            <person name="Moestl D."/>
            <person name="Hilbert H."/>
            <person name="Borzym K."/>
            <person name="Langer I."/>
            <person name="Beck A."/>
            <person name="Lehrach H."/>
            <person name="Reinhardt R."/>
            <person name="Pohl T.M."/>
            <person name="Eger P."/>
            <person name="Zimmermann W."/>
            <person name="Wedler H."/>
            <person name="Wambutt R."/>
            <person name="Purnelle B."/>
            <person name="Goffeau A."/>
            <person name="Cadieu E."/>
            <person name="Dreano S."/>
            <person name="Gloux S."/>
            <person name="Lelaure V."/>
            <person name="Mottier S."/>
            <person name="Galibert F."/>
            <person name="Aves S.J."/>
            <person name="Xiang Z."/>
            <person name="Hunt C."/>
            <person name="Moore K."/>
            <person name="Hurst S.M."/>
            <person name="Lucas M."/>
            <person name="Rochet M."/>
            <person name="Gaillardin C."/>
            <person name="Tallada V.A."/>
            <person name="Garzon A."/>
            <person name="Thode G."/>
            <person name="Daga R.R."/>
            <person name="Cruzado L."/>
            <person name="Jimenez J."/>
            <person name="Sanchez M."/>
            <person name="del Rey F."/>
            <person name="Benito J."/>
            <person name="Dominguez A."/>
            <person name="Revuelta J.L."/>
            <person name="Moreno S."/>
            <person name="Armstrong J."/>
            <person name="Forsburg S.L."/>
            <person name="Cerutti L."/>
            <person name="Lowe T."/>
            <person name="McCombie W.R."/>
            <person name="Paulsen I."/>
            <person name="Potashkin J."/>
            <person name="Shpakovski G.V."/>
            <person name="Ussery D."/>
            <person name="Barrell B.G."/>
            <person name="Nurse P."/>
        </authorList>
    </citation>
    <scope>NUCLEOTIDE SEQUENCE [LARGE SCALE GENOMIC DNA]</scope>
    <source>
        <strain>972 / ATCC 24843</strain>
    </source>
</reference>
<reference key="2">
    <citation type="journal article" date="2006" name="Nat. Biotechnol.">
        <title>ORFeome cloning and global analysis of protein localization in the fission yeast Schizosaccharomyces pombe.</title>
        <authorList>
            <person name="Matsuyama A."/>
            <person name="Arai R."/>
            <person name="Yashiroda Y."/>
            <person name="Shirai A."/>
            <person name="Kamata A."/>
            <person name="Sekido S."/>
            <person name="Kobayashi Y."/>
            <person name="Hashimoto A."/>
            <person name="Hamamoto M."/>
            <person name="Hiraoka Y."/>
            <person name="Horinouchi S."/>
            <person name="Yoshida M."/>
        </authorList>
    </citation>
    <scope>SUBCELLULAR LOCATION [LARGE SCALE ANALYSIS]</scope>
</reference>
<reference key="3">
    <citation type="journal article" date="2023" name="J. Biol. Chem.">
        <title>Identification of novel coenzyme Q10 biosynthetic proteins Coq11 and Coq12 in Schizosaccharomyces pombe.</title>
        <authorList>
            <person name="Nishida I."/>
            <person name="Ohmori Y."/>
            <person name="Yanai R."/>
            <person name="Nishihara S."/>
            <person name="Matsuo Y."/>
            <person name="Kaino T."/>
            <person name="Hirata D."/>
            <person name="Kawamukai M."/>
        </authorList>
    </citation>
    <scope>FUNCTION</scope>
    <scope>CATALYTIC ACTIVITY</scope>
    <scope>SUBCELLULAR LOCATION</scope>
    <scope>DISRUPTION PHENOTYPE</scope>
</reference>
<organism>
    <name type="scientific">Schizosaccharomyces pombe (strain 972 / ATCC 24843)</name>
    <name type="common">Fission yeast</name>
    <dbReference type="NCBI Taxonomy" id="284812"/>
    <lineage>
        <taxon>Eukaryota</taxon>
        <taxon>Fungi</taxon>
        <taxon>Dikarya</taxon>
        <taxon>Ascomycota</taxon>
        <taxon>Taphrinomycotina</taxon>
        <taxon>Schizosaccharomycetes</taxon>
        <taxon>Schizosaccharomycetales</taxon>
        <taxon>Schizosaccharomycetaceae</taxon>
        <taxon>Schizosaccharomyces</taxon>
    </lineage>
</organism>
<feature type="chain" id="PRO_0000317097" description="NAD reductase coq12">
    <location>
        <begin position="1"/>
        <end position="244"/>
    </location>
</feature>
<feature type="region of interest" description="Disordered" evidence="1">
    <location>
        <begin position="131"/>
        <end position="158"/>
    </location>
</feature>
<feature type="compositionally biased region" description="Polar residues" evidence="1">
    <location>
        <begin position="132"/>
        <end position="158"/>
    </location>
</feature>
<gene>
    <name evidence="4" type="primary">coq12</name>
    <name evidence="4" type="ORF">SPAC1071.11</name>
</gene>
<name>COQ12_SCHPO</name>
<evidence type="ECO:0000256" key="1">
    <source>
        <dbReference type="SAM" id="MobiDB-lite"/>
    </source>
</evidence>
<evidence type="ECO:0000269" key="2">
    <source>
    </source>
</evidence>
<evidence type="ECO:0000269" key="3">
    <source>
    </source>
</evidence>
<evidence type="ECO:0000312" key="4">
    <source>
        <dbReference type="PomBase" id="SPAC1071.11"/>
    </source>
</evidence>
<protein>
    <recommendedName>
        <fullName evidence="4">NAD reductase coq12</fullName>
        <ecNumber evidence="3">1.5.1.36</ecNumber>
    </recommendedName>
</protein>
<comment type="function">
    <text evidence="3">NADH-dependent flavin reductase that acts in the coenzyme Q biosynthetic pathway (PubMed:37156397). Required for synthesis of the p-hydroxybenzoic acid (PHB) precursor to form a quinone backbone (PubMed:37156397).</text>
</comment>
<comment type="catalytic activity">
    <reaction evidence="3">
        <text>a reduced flavin + NAD(+) = an oxidized flavin + NADH + 2 H(+)</text>
        <dbReference type="Rhea" id="RHEA:31303"/>
        <dbReference type="ChEBI" id="CHEBI:15378"/>
        <dbReference type="ChEBI" id="CHEBI:57540"/>
        <dbReference type="ChEBI" id="CHEBI:57945"/>
        <dbReference type="ChEBI" id="CHEBI:60531"/>
        <dbReference type="ChEBI" id="CHEBI:62787"/>
        <dbReference type="EC" id="1.5.1.36"/>
    </reaction>
</comment>
<comment type="subcellular location">
    <subcellularLocation>
        <location evidence="2 3">Mitochondrion</location>
    </subcellularLocation>
</comment>
<comment type="disruption phenotype">
    <text evidence="3">Strongly decreases cellular coenzyme Q levels (PubMed:37156397). Increases cellular sulfide levels (PubMed:37156397). Decreases coq4 protein level; addition of p-hydroxybenzoic acid restores protein level (PubMed:37156397). Sensitive to hydrogen peroxide, copper(II) sulfate, and mildly sensitive to thermal stress (PubMed:37156397). Decreases growth on minimal medium (PubMed:37156397).</text>
</comment>